<comment type="catalytic activity">
    <reaction evidence="1">
        <text>tRNA(Gly) + glycine + ATP = glycyl-tRNA(Gly) + AMP + diphosphate</text>
        <dbReference type="Rhea" id="RHEA:16013"/>
        <dbReference type="Rhea" id="RHEA-COMP:9664"/>
        <dbReference type="Rhea" id="RHEA-COMP:9683"/>
        <dbReference type="ChEBI" id="CHEBI:30616"/>
        <dbReference type="ChEBI" id="CHEBI:33019"/>
        <dbReference type="ChEBI" id="CHEBI:57305"/>
        <dbReference type="ChEBI" id="CHEBI:78442"/>
        <dbReference type="ChEBI" id="CHEBI:78522"/>
        <dbReference type="ChEBI" id="CHEBI:456215"/>
        <dbReference type="EC" id="6.1.1.14"/>
    </reaction>
</comment>
<comment type="subunit">
    <text evidence="1">Tetramer of two alpha and two beta subunits.</text>
</comment>
<comment type="subcellular location">
    <subcellularLocation>
        <location evidence="1">Cytoplasm</location>
    </subcellularLocation>
</comment>
<comment type="similarity">
    <text evidence="1">Belongs to the class-II aminoacyl-tRNA synthetase family.</text>
</comment>
<name>SYGA_SYNWW</name>
<protein>
    <recommendedName>
        <fullName evidence="1">Glycine--tRNA ligase alpha subunit</fullName>
        <ecNumber evidence="1">6.1.1.14</ecNumber>
    </recommendedName>
    <alternativeName>
        <fullName evidence="1">Glycyl-tRNA synthetase alpha subunit</fullName>
        <shortName evidence="1">GlyRS</shortName>
    </alternativeName>
</protein>
<feature type="chain" id="PRO_1000047521" description="Glycine--tRNA ligase alpha subunit">
    <location>
        <begin position="1"/>
        <end position="303"/>
    </location>
</feature>
<reference key="1">
    <citation type="journal article" date="2010" name="Environ. Microbiol.">
        <title>The genome of Syntrophomonas wolfei: new insights into syntrophic metabolism and biohydrogen production.</title>
        <authorList>
            <person name="Sieber J.R."/>
            <person name="Sims D.R."/>
            <person name="Han C."/>
            <person name="Kim E."/>
            <person name="Lykidis A."/>
            <person name="Lapidus A.L."/>
            <person name="McDonnald E."/>
            <person name="Rohlin L."/>
            <person name="Culley D.E."/>
            <person name="Gunsalus R."/>
            <person name="McInerney M.J."/>
        </authorList>
    </citation>
    <scope>NUCLEOTIDE SEQUENCE [LARGE SCALE GENOMIC DNA]</scope>
    <source>
        <strain>DSM 2245B / Goettingen</strain>
    </source>
</reference>
<keyword id="KW-0030">Aminoacyl-tRNA synthetase</keyword>
<keyword id="KW-0067">ATP-binding</keyword>
<keyword id="KW-0963">Cytoplasm</keyword>
<keyword id="KW-0436">Ligase</keyword>
<keyword id="KW-0547">Nucleotide-binding</keyword>
<keyword id="KW-0648">Protein biosynthesis</keyword>
<keyword id="KW-1185">Reference proteome</keyword>
<organism>
    <name type="scientific">Syntrophomonas wolfei subsp. wolfei (strain DSM 2245B / Goettingen)</name>
    <dbReference type="NCBI Taxonomy" id="335541"/>
    <lineage>
        <taxon>Bacteria</taxon>
        <taxon>Bacillati</taxon>
        <taxon>Bacillota</taxon>
        <taxon>Clostridia</taxon>
        <taxon>Eubacteriales</taxon>
        <taxon>Syntrophomonadaceae</taxon>
        <taxon>Syntrophomonas</taxon>
    </lineage>
</organism>
<proteinExistence type="inferred from homology"/>
<sequence length="303" mass="35192">MNFQELILRLHNFWGQQGCIIQQPYDVEKGAGTMNPATFLRALGPEPWKVAYVEPSRRPTDGRYGENPNRLQHYYQYQVILKPSPDNVIDLYLASLRDLGIEPEKHDIRLVEDNWESPTLGAWGLGWEIWLDGMEITQFTYFQQCGGFDCLPVSAEITYGIERIAMYIQNKESVFDIEWVDGISYADVHHQAEVDYSHYNFEAADVGALTSMFNICEEEAIRVAERQLVQPAYDYVLKCSHLFNLLDARGAISVTERTAYIGRVRNLARMVAREYLEQRKRLNYPLLKDEKLRKQLIIEEEVL</sequence>
<accession>Q0AWT5</accession>
<dbReference type="EC" id="6.1.1.14" evidence="1"/>
<dbReference type="EMBL" id="CP000448">
    <property type="protein sequence ID" value="ABI68819.1"/>
    <property type="molecule type" value="Genomic_DNA"/>
</dbReference>
<dbReference type="RefSeq" id="WP_011640918.1">
    <property type="nucleotide sequence ID" value="NC_008346.1"/>
</dbReference>
<dbReference type="SMR" id="Q0AWT5"/>
<dbReference type="STRING" id="335541.Swol_1516"/>
<dbReference type="KEGG" id="swo:Swol_1516"/>
<dbReference type="eggNOG" id="COG0752">
    <property type="taxonomic scope" value="Bacteria"/>
</dbReference>
<dbReference type="HOGENOM" id="CLU_057066_1_0_9"/>
<dbReference type="OrthoDB" id="9802183at2"/>
<dbReference type="Proteomes" id="UP000001968">
    <property type="component" value="Chromosome"/>
</dbReference>
<dbReference type="GO" id="GO:0005829">
    <property type="term" value="C:cytosol"/>
    <property type="evidence" value="ECO:0007669"/>
    <property type="project" value="TreeGrafter"/>
</dbReference>
<dbReference type="GO" id="GO:0005524">
    <property type="term" value="F:ATP binding"/>
    <property type="evidence" value="ECO:0007669"/>
    <property type="project" value="UniProtKB-UniRule"/>
</dbReference>
<dbReference type="GO" id="GO:0140096">
    <property type="term" value="F:catalytic activity, acting on a protein"/>
    <property type="evidence" value="ECO:0007669"/>
    <property type="project" value="UniProtKB-ARBA"/>
</dbReference>
<dbReference type="GO" id="GO:0004820">
    <property type="term" value="F:glycine-tRNA ligase activity"/>
    <property type="evidence" value="ECO:0007669"/>
    <property type="project" value="UniProtKB-UniRule"/>
</dbReference>
<dbReference type="GO" id="GO:0016740">
    <property type="term" value="F:transferase activity"/>
    <property type="evidence" value="ECO:0007669"/>
    <property type="project" value="UniProtKB-ARBA"/>
</dbReference>
<dbReference type="GO" id="GO:0006426">
    <property type="term" value="P:glycyl-tRNA aminoacylation"/>
    <property type="evidence" value="ECO:0007669"/>
    <property type="project" value="UniProtKB-UniRule"/>
</dbReference>
<dbReference type="CDD" id="cd00733">
    <property type="entry name" value="GlyRS_alpha_core"/>
    <property type="match status" value="1"/>
</dbReference>
<dbReference type="FunFam" id="3.30.930.10:FF:000006">
    <property type="entry name" value="Glycine--tRNA ligase alpha subunit"/>
    <property type="match status" value="1"/>
</dbReference>
<dbReference type="Gene3D" id="3.30.930.10">
    <property type="entry name" value="Bira Bifunctional Protein, Domain 2"/>
    <property type="match status" value="1"/>
</dbReference>
<dbReference type="Gene3D" id="1.20.58.180">
    <property type="entry name" value="Class II aaRS and biotin synthetases, domain 2"/>
    <property type="match status" value="1"/>
</dbReference>
<dbReference type="HAMAP" id="MF_00254">
    <property type="entry name" value="Gly_tRNA_synth_alpha"/>
    <property type="match status" value="1"/>
</dbReference>
<dbReference type="InterPro" id="IPR045864">
    <property type="entry name" value="aa-tRNA-synth_II/BPL/LPL"/>
</dbReference>
<dbReference type="InterPro" id="IPR006194">
    <property type="entry name" value="Gly-tRNA-synth_heterodimer"/>
</dbReference>
<dbReference type="InterPro" id="IPR002310">
    <property type="entry name" value="Gly-tRNA_ligase_asu"/>
</dbReference>
<dbReference type="NCBIfam" id="TIGR00388">
    <property type="entry name" value="glyQ"/>
    <property type="match status" value="1"/>
</dbReference>
<dbReference type="NCBIfam" id="NF006827">
    <property type="entry name" value="PRK09348.1"/>
    <property type="match status" value="1"/>
</dbReference>
<dbReference type="PANTHER" id="PTHR30075:SF2">
    <property type="entry name" value="GLYCINE--TRNA LIGASE, CHLOROPLASTIC_MITOCHONDRIAL 2"/>
    <property type="match status" value="1"/>
</dbReference>
<dbReference type="PANTHER" id="PTHR30075">
    <property type="entry name" value="GLYCYL-TRNA SYNTHETASE"/>
    <property type="match status" value="1"/>
</dbReference>
<dbReference type="Pfam" id="PF02091">
    <property type="entry name" value="tRNA-synt_2e"/>
    <property type="match status" value="1"/>
</dbReference>
<dbReference type="PRINTS" id="PR01044">
    <property type="entry name" value="TRNASYNTHGA"/>
</dbReference>
<dbReference type="SUPFAM" id="SSF55681">
    <property type="entry name" value="Class II aaRS and biotin synthetases"/>
    <property type="match status" value="1"/>
</dbReference>
<dbReference type="PROSITE" id="PS50861">
    <property type="entry name" value="AA_TRNA_LIGASE_II_GLYAB"/>
    <property type="match status" value="1"/>
</dbReference>
<gene>
    <name evidence="1" type="primary">glyQ</name>
    <name type="ordered locus">Swol_1516</name>
</gene>
<evidence type="ECO:0000255" key="1">
    <source>
        <dbReference type="HAMAP-Rule" id="MF_00254"/>
    </source>
</evidence>